<dbReference type="EMBL" id="X64346">
    <property type="protein sequence ID" value="CAA45671.1"/>
    <property type="molecule type" value="Genomic_DNA"/>
</dbReference>
<dbReference type="RefSeq" id="NP_040250.1">
    <property type="nucleotide sequence ID" value="NC_001350.1"/>
</dbReference>
<dbReference type="KEGG" id="vg:1682469"/>
<dbReference type="Proteomes" id="UP000000587">
    <property type="component" value="Segment"/>
</dbReference>
<dbReference type="InterPro" id="IPR008550">
    <property type="entry name" value="Herpesvirus_BRRF2-like"/>
</dbReference>
<dbReference type="Pfam" id="PF05734">
    <property type="entry name" value="DUF832"/>
    <property type="match status" value="1"/>
</dbReference>
<reference key="1">
    <citation type="journal article" date="1992" name="J. Virol.">
        <title>Primary structure of the herpesvirus saimiri genome.</title>
        <authorList>
            <person name="Albrecht J.-C."/>
            <person name="Nicholas J."/>
            <person name="Biller D."/>
            <person name="Cameron K.R."/>
            <person name="Biesinger B."/>
            <person name="Newman C."/>
            <person name="Wittmann S."/>
            <person name="Craxton M.A."/>
            <person name="Coleman H."/>
            <person name="Fleckenstein B."/>
            <person name="Honess R.W."/>
        </authorList>
    </citation>
    <scope>NUCLEOTIDE SEQUENCE [LARGE SCALE GENOMIC DNA]</scope>
</reference>
<gene>
    <name type="primary">48</name>
    <name type="synonym">EDLF5</name>
</gene>
<proteinExistence type="inferred from homology"/>
<organism>
    <name type="scientific">Saimiriine herpesvirus 2 (strain 11)</name>
    <name type="common">SaHV-2</name>
    <name type="synonym">Herpesvirus saimiri</name>
    <dbReference type="NCBI Taxonomy" id="10383"/>
    <lineage>
        <taxon>Viruses</taxon>
        <taxon>Duplodnaviria</taxon>
        <taxon>Heunggongvirae</taxon>
        <taxon>Peploviricota</taxon>
        <taxon>Herviviricetes</taxon>
        <taxon>Herpesvirales</taxon>
        <taxon>Orthoherpesviridae</taxon>
        <taxon>Gammaherpesvirinae</taxon>
        <taxon>Rhadinovirus</taxon>
        <taxon>Rhadinovirus saimiriinegamma2</taxon>
        <taxon>Saimiriine herpesvirus 2</taxon>
    </lineage>
</organism>
<evidence type="ECO:0000256" key="1">
    <source>
        <dbReference type="SAM" id="MobiDB-lite"/>
    </source>
</evidence>
<evidence type="ECO:0000305" key="2"/>
<comment type="similarity">
    <text evidence="2">Belongs to the herpesviridae BBRF2 family.</text>
</comment>
<sequence>MIAFSLTMELSLPVFGVTQANKEEWDNIWKNFQQFPNVSRTLGLLRRFFLRNDLGFLSAVVILKQYVENLPTTKQKLNLIECTQGLKFLIRSLYEKIKDQCDVKSSIREIFYDCKARLLLLLEEGCGCGACCATSAALSKVGHLGRPPKLTPHKPHCSAQSALTCVHNHIILGMNPGMSEWMVLEIMFLPSDFYDFNEHKNEISLVATCINCCWLYFMLQQYMSSDLLAIEEALNKTYLALHPNDKASYSNILKFLTSNSHREHVTQKVNVKAFMQSSLYKIIKDTEKNPSPKTKMLMISILGSRGIGMDLFCSQSVLKAPLIDHKLSPVSEYEDFDEDEVELCISDDEVDSEDGNLCVLDDESESVNSVALRQVLTVDKQANEKEYKKIIDKSDDRDDRDKDEYELENEEYNRDEEEDEGEDEEDEKDEKEEGEDEGDDGEDEGEDEGEDEGDEGDEGDEGEDEGEDEDDEEDEGEDEGDEGDEGEDEGDEGDEGEDEGDEGDEGKDEGDEGDEGKDEGDEGDEGDEGDEGEDEWEDEGDEGEDEGDEGEDEGDEGEDEGEDEGDEGEDEGEDEGDEGEDEGEDEGDEGEDEGEDEGDEGEDEGEDEGDEGDEGEDEGDEGEDEGDEGEDEGDEGEDEGDEGEDEGDEGEDEGDEGEDEGDEGDEGEDEGDEGEDEGDEGEDEGDEGDEGDEGDEGDEGEDEGEDEGEDEGDEGTKDKEGNANKVVQNPFDYYNWLQKSTLSIVHNKSIHATEHMLEDQLQHSLTASFETHLYIKPFRNTKESQAATNFVYFREQV</sequence>
<keyword id="KW-1185">Reference proteome</keyword>
<protein>
    <recommendedName>
        <fullName>Uncharacterized gene 48 protein</fullName>
    </recommendedName>
</protein>
<accession>Q01033</accession>
<feature type="chain" id="PRO_0000116262" description="Uncharacterized gene 48 protein">
    <location>
        <begin position="1"/>
        <end position="797"/>
    </location>
</feature>
<feature type="region of interest" description="Disordered" evidence="1">
    <location>
        <begin position="394"/>
        <end position="724"/>
    </location>
</feature>
<feature type="compositionally biased region" description="Basic and acidic residues" evidence="1">
    <location>
        <begin position="394"/>
        <end position="403"/>
    </location>
</feature>
<feature type="compositionally biased region" description="Acidic residues" evidence="1">
    <location>
        <begin position="404"/>
        <end position="713"/>
    </location>
</feature>
<organismHost>
    <name type="scientific">Saimiri sciureus</name>
    <name type="common">Common squirrel monkey</name>
    <dbReference type="NCBI Taxonomy" id="9521"/>
</organismHost>
<name>VG48_SHV21</name>